<gene>
    <name evidence="1" type="primary">mdh</name>
    <name type="ordered locus">Ppha_1029</name>
</gene>
<keyword id="KW-0520">NAD</keyword>
<keyword id="KW-0560">Oxidoreductase</keyword>
<keyword id="KW-1185">Reference proteome</keyword>
<keyword id="KW-0816">Tricarboxylic acid cycle</keyword>
<protein>
    <recommendedName>
        <fullName evidence="1">Malate dehydrogenase</fullName>
        <ecNumber evidence="1">1.1.1.37</ecNumber>
    </recommendedName>
</protein>
<name>MDH_PELPB</name>
<dbReference type="EC" id="1.1.1.37" evidence="1"/>
<dbReference type="EMBL" id="CP001110">
    <property type="protein sequence ID" value="ACF43313.1"/>
    <property type="molecule type" value="Genomic_DNA"/>
</dbReference>
<dbReference type="RefSeq" id="WP_012507807.1">
    <property type="nucleotide sequence ID" value="NC_011060.1"/>
</dbReference>
<dbReference type="SMR" id="B4SFQ8"/>
<dbReference type="STRING" id="324925.Ppha_1029"/>
<dbReference type="KEGG" id="pph:Ppha_1029"/>
<dbReference type="eggNOG" id="COG0039">
    <property type="taxonomic scope" value="Bacteria"/>
</dbReference>
<dbReference type="HOGENOM" id="CLU_045401_2_1_10"/>
<dbReference type="OrthoDB" id="9802969at2"/>
<dbReference type="Proteomes" id="UP000002724">
    <property type="component" value="Chromosome"/>
</dbReference>
<dbReference type="GO" id="GO:0004459">
    <property type="term" value="F:L-lactate dehydrogenase activity"/>
    <property type="evidence" value="ECO:0007669"/>
    <property type="project" value="TreeGrafter"/>
</dbReference>
<dbReference type="GO" id="GO:0030060">
    <property type="term" value="F:L-malate dehydrogenase (NAD+) activity"/>
    <property type="evidence" value="ECO:0007669"/>
    <property type="project" value="UniProtKB-UniRule"/>
</dbReference>
<dbReference type="GO" id="GO:0006089">
    <property type="term" value="P:lactate metabolic process"/>
    <property type="evidence" value="ECO:0007669"/>
    <property type="project" value="TreeGrafter"/>
</dbReference>
<dbReference type="GO" id="GO:0006099">
    <property type="term" value="P:tricarboxylic acid cycle"/>
    <property type="evidence" value="ECO:0007669"/>
    <property type="project" value="UniProtKB-UniRule"/>
</dbReference>
<dbReference type="CDD" id="cd01339">
    <property type="entry name" value="LDH-like_MDH"/>
    <property type="match status" value="1"/>
</dbReference>
<dbReference type="FunFam" id="3.40.50.720:FF:000018">
    <property type="entry name" value="Malate dehydrogenase"/>
    <property type="match status" value="1"/>
</dbReference>
<dbReference type="FunFam" id="3.90.110.10:FF:000004">
    <property type="entry name" value="Malate dehydrogenase"/>
    <property type="match status" value="1"/>
</dbReference>
<dbReference type="Gene3D" id="3.90.110.10">
    <property type="entry name" value="Lactate dehydrogenase/glycoside hydrolase, family 4, C-terminal"/>
    <property type="match status" value="1"/>
</dbReference>
<dbReference type="Gene3D" id="3.40.50.720">
    <property type="entry name" value="NAD(P)-binding Rossmann-like Domain"/>
    <property type="match status" value="1"/>
</dbReference>
<dbReference type="HAMAP" id="MF_00487">
    <property type="entry name" value="Malate_dehydrog_3"/>
    <property type="match status" value="1"/>
</dbReference>
<dbReference type="InterPro" id="IPR001557">
    <property type="entry name" value="L-lactate/malate_DH"/>
</dbReference>
<dbReference type="InterPro" id="IPR022383">
    <property type="entry name" value="Lactate/malate_DH_C"/>
</dbReference>
<dbReference type="InterPro" id="IPR001236">
    <property type="entry name" value="Lactate/malate_DH_N"/>
</dbReference>
<dbReference type="InterPro" id="IPR015955">
    <property type="entry name" value="Lactate_DH/Glyco_Ohase_4_C"/>
</dbReference>
<dbReference type="InterPro" id="IPR011275">
    <property type="entry name" value="Malate_DH_type3"/>
</dbReference>
<dbReference type="InterPro" id="IPR036291">
    <property type="entry name" value="NAD(P)-bd_dom_sf"/>
</dbReference>
<dbReference type="NCBIfam" id="TIGR01763">
    <property type="entry name" value="MalateDH_bact"/>
    <property type="match status" value="1"/>
</dbReference>
<dbReference type="NCBIfam" id="NF004863">
    <property type="entry name" value="PRK06223.1"/>
    <property type="match status" value="1"/>
</dbReference>
<dbReference type="PANTHER" id="PTHR43128">
    <property type="entry name" value="L-2-HYDROXYCARBOXYLATE DEHYDROGENASE (NAD(P)(+))"/>
    <property type="match status" value="1"/>
</dbReference>
<dbReference type="PANTHER" id="PTHR43128:SF16">
    <property type="entry name" value="L-LACTATE DEHYDROGENASE"/>
    <property type="match status" value="1"/>
</dbReference>
<dbReference type="Pfam" id="PF02866">
    <property type="entry name" value="Ldh_1_C"/>
    <property type="match status" value="1"/>
</dbReference>
<dbReference type="Pfam" id="PF00056">
    <property type="entry name" value="Ldh_1_N"/>
    <property type="match status" value="1"/>
</dbReference>
<dbReference type="PIRSF" id="PIRSF000102">
    <property type="entry name" value="Lac_mal_DH"/>
    <property type="match status" value="1"/>
</dbReference>
<dbReference type="PRINTS" id="PR00086">
    <property type="entry name" value="LLDHDRGNASE"/>
</dbReference>
<dbReference type="SUPFAM" id="SSF56327">
    <property type="entry name" value="LDH C-terminal domain-like"/>
    <property type="match status" value="1"/>
</dbReference>
<dbReference type="SUPFAM" id="SSF51735">
    <property type="entry name" value="NAD(P)-binding Rossmann-fold domains"/>
    <property type="match status" value="1"/>
</dbReference>
<feature type="chain" id="PRO_1000126144" description="Malate dehydrogenase">
    <location>
        <begin position="1"/>
        <end position="310"/>
    </location>
</feature>
<feature type="active site" description="Proton acceptor" evidence="1">
    <location>
        <position position="174"/>
    </location>
</feature>
<feature type="binding site" evidence="1">
    <location>
        <begin position="7"/>
        <end position="12"/>
    </location>
    <ligand>
        <name>NAD(+)</name>
        <dbReference type="ChEBI" id="CHEBI:57540"/>
    </ligand>
</feature>
<feature type="binding site" evidence="1">
    <location>
        <position position="32"/>
    </location>
    <ligand>
        <name>NAD(+)</name>
        <dbReference type="ChEBI" id="CHEBI:57540"/>
    </ligand>
</feature>
<feature type="binding site" evidence="1">
    <location>
        <position position="81"/>
    </location>
    <ligand>
        <name>substrate</name>
    </ligand>
</feature>
<feature type="binding site" evidence="1">
    <location>
        <position position="87"/>
    </location>
    <ligand>
        <name>substrate</name>
    </ligand>
</feature>
<feature type="binding site" evidence="1">
    <location>
        <position position="94"/>
    </location>
    <ligand>
        <name>NAD(+)</name>
        <dbReference type="ChEBI" id="CHEBI:57540"/>
    </ligand>
</feature>
<feature type="binding site" evidence="1">
    <location>
        <begin position="117"/>
        <end position="119"/>
    </location>
    <ligand>
        <name>NAD(+)</name>
        <dbReference type="ChEBI" id="CHEBI:57540"/>
    </ligand>
</feature>
<feature type="binding site" evidence="1">
    <location>
        <position position="119"/>
    </location>
    <ligand>
        <name>substrate</name>
    </ligand>
</feature>
<feature type="binding site" evidence="1">
    <location>
        <position position="150"/>
    </location>
    <ligand>
        <name>substrate</name>
    </ligand>
</feature>
<comment type="function">
    <text evidence="1">Catalyzes the reversible oxidation of malate to oxaloacetate.</text>
</comment>
<comment type="catalytic activity">
    <reaction evidence="1">
        <text>(S)-malate + NAD(+) = oxaloacetate + NADH + H(+)</text>
        <dbReference type="Rhea" id="RHEA:21432"/>
        <dbReference type="ChEBI" id="CHEBI:15378"/>
        <dbReference type="ChEBI" id="CHEBI:15589"/>
        <dbReference type="ChEBI" id="CHEBI:16452"/>
        <dbReference type="ChEBI" id="CHEBI:57540"/>
        <dbReference type="ChEBI" id="CHEBI:57945"/>
        <dbReference type="EC" id="1.1.1.37"/>
    </reaction>
</comment>
<comment type="similarity">
    <text evidence="1">Belongs to the LDH/MDH superfamily. MDH type 3 family.</text>
</comment>
<organism>
    <name type="scientific">Pelodictyon phaeoclathratiforme (strain DSM 5477 / BU-1)</name>
    <dbReference type="NCBI Taxonomy" id="324925"/>
    <lineage>
        <taxon>Bacteria</taxon>
        <taxon>Pseudomonadati</taxon>
        <taxon>Chlorobiota</taxon>
        <taxon>Chlorobiia</taxon>
        <taxon>Chlorobiales</taxon>
        <taxon>Chlorobiaceae</taxon>
        <taxon>Chlorobium/Pelodictyon group</taxon>
        <taxon>Pelodictyon</taxon>
    </lineage>
</organism>
<reference key="1">
    <citation type="submission" date="2008-06" db="EMBL/GenBank/DDBJ databases">
        <title>Complete sequence of Pelodictyon phaeoclathratiforme BU-1.</title>
        <authorList>
            <consortium name="US DOE Joint Genome Institute"/>
            <person name="Lucas S."/>
            <person name="Copeland A."/>
            <person name="Lapidus A."/>
            <person name="Glavina del Rio T."/>
            <person name="Dalin E."/>
            <person name="Tice H."/>
            <person name="Bruce D."/>
            <person name="Goodwin L."/>
            <person name="Pitluck S."/>
            <person name="Schmutz J."/>
            <person name="Larimer F."/>
            <person name="Land M."/>
            <person name="Hauser L."/>
            <person name="Kyrpides N."/>
            <person name="Mikhailova N."/>
            <person name="Liu Z."/>
            <person name="Li T."/>
            <person name="Zhao F."/>
            <person name="Overmann J."/>
            <person name="Bryant D.A."/>
            <person name="Richardson P."/>
        </authorList>
    </citation>
    <scope>NUCLEOTIDE SEQUENCE [LARGE SCALE GENOMIC DNA]</scope>
    <source>
        <strain>DSM 5477 / BU-1</strain>
    </source>
</reference>
<proteinExistence type="inferred from homology"/>
<evidence type="ECO:0000255" key="1">
    <source>
        <dbReference type="HAMAP-Rule" id="MF_00487"/>
    </source>
</evidence>
<sequence length="310" mass="33099">MKITVIGAGNVGATAALRIAEKQLAKEVVLIDIVEGIPQGKALDMYESGAVALFDTTVLGSNDYKDSADSDIVLITAGLARKPGMSREDLLKINATIIRDVTTEVMKYSANPIIIMVSNPLDVMTFVAWKASGLPKERVIGMAGVLDTARYKNFIAEALDVSMQDISAMVLGGHGDSMVPIVNYTNVAGIPLTELLPQDKIDALVERTRNGGIEIVNYLKTGSAFYAPAASAVEMIEGITKDRKRIIPCTTLLEGQYGIESVFCGVPVKLGKNGVEQILEINLTASELEALRKSAALVEENCKNLATLLG</sequence>
<accession>B4SFQ8</accession>